<gene>
    <name evidence="1" type="primary">recA</name>
    <name type="ordered locus">CHU_3045</name>
</gene>
<feature type="chain" id="PRO_1000047907" description="Protein RecA">
    <location>
        <begin position="1"/>
        <end position="355"/>
    </location>
</feature>
<feature type="binding site" evidence="1">
    <location>
        <begin position="74"/>
        <end position="81"/>
    </location>
    <ligand>
        <name>ATP</name>
        <dbReference type="ChEBI" id="CHEBI:30616"/>
    </ligand>
</feature>
<organism>
    <name type="scientific">Cytophaga hutchinsonii (strain ATCC 33406 / DSM 1761 / CIP 103989 / NBRC 15051 / NCIMB 9469 / D465)</name>
    <dbReference type="NCBI Taxonomy" id="269798"/>
    <lineage>
        <taxon>Bacteria</taxon>
        <taxon>Pseudomonadati</taxon>
        <taxon>Bacteroidota</taxon>
        <taxon>Cytophagia</taxon>
        <taxon>Cytophagales</taxon>
        <taxon>Cytophagaceae</taxon>
        <taxon>Cytophaga</taxon>
    </lineage>
</organism>
<keyword id="KW-0067">ATP-binding</keyword>
<keyword id="KW-0963">Cytoplasm</keyword>
<keyword id="KW-0227">DNA damage</keyword>
<keyword id="KW-0233">DNA recombination</keyword>
<keyword id="KW-0234">DNA repair</keyword>
<keyword id="KW-0238">DNA-binding</keyword>
<keyword id="KW-0547">Nucleotide-binding</keyword>
<keyword id="KW-1185">Reference proteome</keyword>
<keyword id="KW-0742">SOS response</keyword>
<reference key="1">
    <citation type="journal article" date="2007" name="Appl. Environ. Microbiol.">
        <title>Genome sequence of the cellulolytic gliding bacterium Cytophaga hutchinsonii.</title>
        <authorList>
            <person name="Xie G."/>
            <person name="Bruce D.C."/>
            <person name="Challacombe J.F."/>
            <person name="Chertkov O."/>
            <person name="Detter J.C."/>
            <person name="Gilna P."/>
            <person name="Han C.S."/>
            <person name="Lucas S."/>
            <person name="Misra M."/>
            <person name="Myers G.L."/>
            <person name="Richardson P."/>
            <person name="Tapia R."/>
            <person name="Thayer N."/>
            <person name="Thompson L.S."/>
            <person name="Brettin T.S."/>
            <person name="Henrissat B."/>
            <person name="Wilson D.B."/>
            <person name="McBride M.J."/>
        </authorList>
    </citation>
    <scope>NUCLEOTIDE SEQUENCE [LARGE SCALE GENOMIC DNA]</scope>
    <source>
        <strain>ATCC 33406 / DSM 1761 / JCM 20678 / CIP 103989 / IAM 12607 / NBRC 15051 / NCIMB 9469 / D465</strain>
    </source>
</reference>
<protein>
    <recommendedName>
        <fullName evidence="1">Protein RecA</fullName>
    </recommendedName>
    <alternativeName>
        <fullName evidence="1">Recombinase A</fullName>
    </alternativeName>
</protein>
<proteinExistence type="inferred from homology"/>
<evidence type="ECO:0000255" key="1">
    <source>
        <dbReference type="HAMAP-Rule" id="MF_00268"/>
    </source>
</evidence>
<dbReference type="EMBL" id="CP000383">
    <property type="protein sequence ID" value="ABG60286.1"/>
    <property type="molecule type" value="Genomic_DNA"/>
</dbReference>
<dbReference type="RefSeq" id="WP_011586396.1">
    <property type="nucleotide sequence ID" value="NC_008255.1"/>
</dbReference>
<dbReference type="SMR" id="Q11QM8"/>
<dbReference type="STRING" id="269798.CHU_3045"/>
<dbReference type="KEGG" id="chu:CHU_3045"/>
<dbReference type="eggNOG" id="COG0468">
    <property type="taxonomic scope" value="Bacteria"/>
</dbReference>
<dbReference type="HOGENOM" id="CLU_040469_3_2_10"/>
<dbReference type="OrthoDB" id="9776733at2"/>
<dbReference type="Proteomes" id="UP000001822">
    <property type="component" value="Chromosome"/>
</dbReference>
<dbReference type="GO" id="GO:0005829">
    <property type="term" value="C:cytosol"/>
    <property type="evidence" value="ECO:0007669"/>
    <property type="project" value="TreeGrafter"/>
</dbReference>
<dbReference type="GO" id="GO:0005524">
    <property type="term" value="F:ATP binding"/>
    <property type="evidence" value="ECO:0007669"/>
    <property type="project" value="UniProtKB-UniRule"/>
</dbReference>
<dbReference type="GO" id="GO:0016887">
    <property type="term" value="F:ATP hydrolysis activity"/>
    <property type="evidence" value="ECO:0007669"/>
    <property type="project" value="InterPro"/>
</dbReference>
<dbReference type="GO" id="GO:0140664">
    <property type="term" value="F:ATP-dependent DNA damage sensor activity"/>
    <property type="evidence" value="ECO:0007669"/>
    <property type="project" value="InterPro"/>
</dbReference>
<dbReference type="GO" id="GO:0003684">
    <property type="term" value="F:damaged DNA binding"/>
    <property type="evidence" value="ECO:0007669"/>
    <property type="project" value="UniProtKB-UniRule"/>
</dbReference>
<dbReference type="GO" id="GO:0003697">
    <property type="term" value="F:single-stranded DNA binding"/>
    <property type="evidence" value="ECO:0007669"/>
    <property type="project" value="UniProtKB-UniRule"/>
</dbReference>
<dbReference type="GO" id="GO:0006310">
    <property type="term" value="P:DNA recombination"/>
    <property type="evidence" value="ECO:0007669"/>
    <property type="project" value="UniProtKB-UniRule"/>
</dbReference>
<dbReference type="GO" id="GO:0006281">
    <property type="term" value="P:DNA repair"/>
    <property type="evidence" value="ECO:0007669"/>
    <property type="project" value="UniProtKB-UniRule"/>
</dbReference>
<dbReference type="GO" id="GO:0009432">
    <property type="term" value="P:SOS response"/>
    <property type="evidence" value="ECO:0007669"/>
    <property type="project" value="UniProtKB-UniRule"/>
</dbReference>
<dbReference type="CDD" id="cd00983">
    <property type="entry name" value="RecA"/>
    <property type="match status" value="1"/>
</dbReference>
<dbReference type="FunFam" id="3.40.50.300:FF:000087">
    <property type="entry name" value="Recombinase RecA"/>
    <property type="match status" value="1"/>
</dbReference>
<dbReference type="Gene3D" id="3.40.50.300">
    <property type="entry name" value="P-loop containing nucleotide triphosphate hydrolases"/>
    <property type="match status" value="1"/>
</dbReference>
<dbReference type="HAMAP" id="MF_00268">
    <property type="entry name" value="RecA"/>
    <property type="match status" value="1"/>
</dbReference>
<dbReference type="InterPro" id="IPR003593">
    <property type="entry name" value="AAA+_ATPase"/>
</dbReference>
<dbReference type="InterPro" id="IPR013765">
    <property type="entry name" value="DNA_recomb/repair_RecA"/>
</dbReference>
<dbReference type="InterPro" id="IPR020584">
    <property type="entry name" value="DNA_recomb/repair_RecA_CS"/>
</dbReference>
<dbReference type="InterPro" id="IPR027417">
    <property type="entry name" value="P-loop_NTPase"/>
</dbReference>
<dbReference type="InterPro" id="IPR049261">
    <property type="entry name" value="RecA-like_C"/>
</dbReference>
<dbReference type="InterPro" id="IPR049428">
    <property type="entry name" value="RecA-like_N"/>
</dbReference>
<dbReference type="InterPro" id="IPR020588">
    <property type="entry name" value="RecA_ATP-bd"/>
</dbReference>
<dbReference type="InterPro" id="IPR023400">
    <property type="entry name" value="RecA_C_sf"/>
</dbReference>
<dbReference type="InterPro" id="IPR020587">
    <property type="entry name" value="RecA_monomer-monomer_interface"/>
</dbReference>
<dbReference type="NCBIfam" id="TIGR02012">
    <property type="entry name" value="tigrfam_recA"/>
    <property type="match status" value="1"/>
</dbReference>
<dbReference type="PANTHER" id="PTHR45900:SF1">
    <property type="entry name" value="MITOCHONDRIAL DNA REPAIR PROTEIN RECA HOMOLOG-RELATED"/>
    <property type="match status" value="1"/>
</dbReference>
<dbReference type="PANTHER" id="PTHR45900">
    <property type="entry name" value="RECA"/>
    <property type="match status" value="1"/>
</dbReference>
<dbReference type="Pfam" id="PF00154">
    <property type="entry name" value="RecA"/>
    <property type="match status" value="1"/>
</dbReference>
<dbReference type="Pfam" id="PF21096">
    <property type="entry name" value="RecA_C"/>
    <property type="match status" value="1"/>
</dbReference>
<dbReference type="PRINTS" id="PR00142">
    <property type="entry name" value="RECA"/>
</dbReference>
<dbReference type="SMART" id="SM00382">
    <property type="entry name" value="AAA"/>
    <property type="match status" value="1"/>
</dbReference>
<dbReference type="SUPFAM" id="SSF52540">
    <property type="entry name" value="P-loop containing nucleoside triphosphate hydrolases"/>
    <property type="match status" value="1"/>
</dbReference>
<dbReference type="SUPFAM" id="SSF54752">
    <property type="entry name" value="RecA protein, C-terminal domain"/>
    <property type="match status" value="1"/>
</dbReference>
<dbReference type="PROSITE" id="PS00321">
    <property type="entry name" value="RECA_1"/>
    <property type="match status" value="1"/>
</dbReference>
<dbReference type="PROSITE" id="PS50162">
    <property type="entry name" value="RECA_2"/>
    <property type="match status" value="1"/>
</dbReference>
<dbReference type="PROSITE" id="PS50163">
    <property type="entry name" value="RECA_3"/>
    <property type="match status" value="1"/>
</dbReference>
<accession>Q11QM8</accession>
<comment type="function">
    <text evidence="1">Can catalyze the hydrolysis of ATP in the presence of single-stranded DNA, the ATP-dependent uptake of single-stranded DNA by duplex DNA, and the ATP-dependent hybridization of homologous single-stranded DNAs. It interacts with LexA causing its activation and leading to its autocatalytic cleavage.</text>
</comment>
<comment type="subcellular location">
    <subcellularLocation>
        <location evidence="1">Cytoplasm</location>
    </subcellularLocation>
</comment>
<comment type="similarity">
    <text evidence="1">Belongs to the RecA family.</text>
</comment>
<sequence length="355" mass="38344">MSKSTSTPNPQNEKLKALQLTIDKLEKTYGKGTVMKLSDEVVMDVPVISTGSLGLDIALGIGGLPKGRIVEIYGPESSGKTTLSMHCIAEAQKAGGIAAFIDAEHAFDKTYAEKLGIDTTNLLISQPDNGEQALEIAEHLIRSGAIDIIVIDSVAALVPKAEIEGEMGDSKMGLQARLMSQALRKLTGAINKTGCCCIFINQLREKIGVMFGNPETTTGGNALKFYASVRLDIRRIGQIKESADNITGNRTKVKVVKNKMAPPFKVIEFDIMYGEGISKIGEIIDLGVELGIINKAGSWFSYEGTKLGQGRDAVRTVFLDNPEMQDEIELKIRQKVQLSGVPAAMEAKELEEEEA</sequence>
<name>RECA_CYTH3</name>